<proteinExistence type="inferred from homology"/>
<organism>
    <name type="scientific">Poliocitellus franklinii</name>
    <name type="common">Franklin's ground squirrel</name>
    <name type="synonym">Spermophilus franklinii</name>
    <dbReference type="NCBI Taxonomy" id="45470"/>
    <lineage>
        <taxon>Eukaryota</taxon>
        <taxon>Metazoa</taxon>
        <taxon>Chordata</taxon>
        <taxon>Craniata</taxon>
        <taxon>Vertebrata</taxon>
        <taxon>Euteleostomi</taxon>
        <taxon>Mammalia</taxon>
        <taxon>Eutheria</taxon>
        <taxon>Euarchontoglires</taxon>
        <taxon>Glires</taxon>
        <taxon>Rodentia</taxon>
        <taxon>Sciuromorpha</taxon>
        <taxon>Sciuridae</taxon>
        <taxon>Xerinae</taxon>
        <taxon>Marmotini</taxon>
        <taxon>Poliocitellus</taxon>
    </lineage>
</organism>
<keyword id="KW-0249">Electron transport</keyword>
<keyword id="KW-0349">Heme</keyword>
<keyword id="KW-0408">Iron</keyword>
<keyword id="KW-0472">Membrane</keyword>
<keyword id="KW-0479">Metal-binding</keyword>
<keyword id="KW-0496">Mitochondrion</keyword>
<keyword id="KW-0999">Mitochondrion inner membrane</keyword>
<keyword id="KW-0679">Respiratory chain</keyword>
<keyword id="KW-0812">Transmembrane</keyword>
<keyword id="KW-1133">Transmembrane helix</keyword>
<keyword id="KW-0813">Transport</keyword>
<keyword id="KW-0830">Ubiquinone</keyword>
<feature type="chain" id="PRO_0000061595" description="Cytochrome b">
    <location>
        <begin position="1"/>
        <end position="379"/>
    </location>
</feature>
<feature type="transmembrane region" description="Helical" evidence="2">
    <location>
        <begin position="33"/>
        <end position="53"/>
    </location>
</feature>
<feature type="transmembrane region" description="Helical" evidence="2">
    <location>
        <begin position="77"/>
        <end position="98"/>
    </location>
</feature>
<feature type="transmembrane region" description="Helical" evidence="2">
    <location>
        <begin position="113"/>
        <end position="133"/>
    </location>
</feature>
<feature type="transmembrane region" description="Helical" evidence="2">
    <location>
        <begin position="178"/>
        <end position="198"/>
    </location>
</feature>
<feature type="transmembrane region" description="Helical" evidence="2">
    <location>
        <begin position="226"/>
        <end position="246"/>
    </location>
</feature>
<feature type="transmembrane region" description="Helical" evidence="2">
    <location>
        <begin position="288"/>
        <end position="308"/>
    </location>
</feature>
<feature type="transmembrane region" description="Helical" evidence="2">
    <location>
        <begin position="320"/>
        <end position="340"/>
    </location>
</feature>
<feature type="transmembrane region" description="Helical" evidence="2">
    <location>
        <begin position="347"/>
        <end position="367"/>
    </location>
</feature>
<feature type="binding site" description="axial binding residue" evidence="2">
    <location>
        <position position="83"/>
    </location>
    <ligand>
        <name>heme b</name>
        <dbReference type="ChEBI" id="CHEBI:60344"/>
        <label>b562</label>
    </ligand>
    <ligandPart>
        <name>Fe</name>
        <dbReference type="ChEBI" id="CHEBI:18248"/>
    </ligandPart>
</feature>
<feature type="binding site" description="axial binding residue" evidence="2">
    <location>
        <position position="97"/>
    </location>
    <ligand>
        <name>heme b</name>
        <dbReference type="ChEBI" id="CHEBI:60344"/>
        <label>b566</label>
    </ligand>
    <ligandPart>
        <name>Fe</name>
        <dbReference type="ChEBI" id="CHEBI:18248"/>
    </ligandPart>
</feature>
<feature type="binding site" description="axial binding residue" evidence="2">
    <location>
        <position position="182"/>
    </location>
    <ligand>
        <name>heme b</name>
        <dbReference type="ChEBI" id="CHEBI:60344"/>
        <label>b562</label>
    </ligand>
    <ligandPart>
        <name>Fe</name>
        <dbReference type="ChEBI" id="CHEBI:18248"/>
    </ligandPart>
</feature>
<feature type="binding site" description="axial binding residue" evidence="2">
    <location>
        <position position="196"/>
    </location>
    <ligand>
        <name>heme b</name>
        <dbReference type="ChEBI" id="CHEBI:60344"/>
        <label>b566</label>
    </ligand>
    <ligandPart>
        <name>Fe</name>
        <dbReference type="ChEBI" id="CHEBI:18248"/>
    </ligandPart>
</feature>
<feature type="binding site" evidence="2">
    <location>
        <position position="201"/>
    </location>
    <ligand>
        <name>a ubiquinone</name>
        <dbReference type="ChEBI" id="CHEBI:16389"/>
    </ligand>
</feature>
<accession>Q9TF57</accession>
<sequence>MTNIRKTHPLIKIINHSFIDLPTPSNISAWWNLGSLLGLCLAIQILTGLFLAMHYTSDTMTAFSSVTHICRDVNYGWLIRYMHANGASMFFICLFLHVGRGLYYGSYTYFETWNVGVILLFAVMATAFMGYVLPWGQMSFWGATVITNLLSAIPYIGTTLVEWIWGGFSVDKATLTRFFAFHFVLPFIIAALVMVHLLFLHETGSNNPSGLISDSDKIPFHPYYTIKDILGVLLLILALMTLVLFSPDLLGDPDNYTPANPLSTPPHIKPEWYFLFAYAILRSIPNKLGGVLALVFSILILMLFPLLHLSKQRSMMFRPLSQCMFWILVADLFTLTWIGGQPVEHPFIIIGQLASILYFTIILTILPAASLIENKLLKW</sequence>
<comment type="function">
    <text evidence="2">Component of the ubiquinol-cytochrome c reductase complex (complex III or cytochrome b-c1 complex) that is part of the mitochondrial respiratory chain. The b-c1 complex mediates electron transfer from ubiquinol to cytochrome c. Contributes to the generation of a proton gradient across the mitochondrial membrane that is then used for ATP synthesis.</text>
</comment>
<comment type="cofactor">
    <cofactor evidence="2">
        <name>heme b</name>
        <dbReference type="ChEBI" id="CHEBI:60344"/>
    </cofactor>
    <text evidence="2">Binds 2 heme b groups non-covalently.</text>
</comment>
<comment type="subunit">
    <text evidence="2">The cytochrome bc1 complex contains 11 subunits: 3 respiratory subunits (MT-CYB, CYC1 and UQCRFS1), 2 core proteins (UQCRC1 and UQCRC2) and 6 low-molecular weight proteins (UQCRH/QCR6, UQCRB/QCR7, UQCRQ/QCR8, UQCR10/QCR9, UQCR11/QCR10 and a cleavage product of UQCRFS1). This cytochrome bc1 complex then forms a dimer.</text>
</comment>
<comment type="subcellular location">
    <subcellularLocation>
        <location evidence="2">Mitochondrion inner membrane</location>
        <topology evidence="2">Multi-pass membrane protein</topology>
    </subcellularLocation>
</comment>
<comment type="miscellaneous">
    <text evidence="1">Heme 1 (or BL or b562) is low-potential and absorbs at about 562 nm, and heme 2 (or BH or b566) is high-potential and absorbs at about 566 nm.</text>
</comment>
<comment type="similarity">
    <text evidence="3 4">Belongs to the cytochrome b family.</text>
</comment>
<comment type="caution">
    <text evidence="2">The full-length protein contains only eight transmembrane helices, not nine as predicted by bioinformatics tools.</text>
</comment>
<dbReference type="EMBL" id="AF157894">
    <property type="protein sequence ID" value="AAD50178.1"/>
    <property type="molecule type" value="Genomic_DNA"/>
</dbReference>
<dbReference type="SMR" id="Q9TF57"/>
<dbReference type="GO" id="GO:0005743">
    <property type="term" value="C:mitochondrial inner membrane"/>
    <property type="evidence" value="ECO:0007669"/>
    <property type="project" value="UniProtKB-SubCell"/>
</dbReference>
<dbReference type="GO" id="GO:0045275">
    <property type="term" value="C:respiratory chain complex III"/>
    <property type="evidence" value="ECO:0007669"/>
    <property type="project" value="InterPro"/>
</dbReference>
<dbReference type="GO" id="GO:0046872">
    <property type="term" value="F:metal ion binding"/>
    <property type="evidence" value="ECO:0007669"/>
    <property type="project" value="UniProtKB-KW"/>
</dbReference>
<dbReference type="GO" id="GO:0008121">
    <property type="term" value="F:ubiquinol-cytochrome-c reductase activity"/>
    <property type="evidence" value="ECO:0007669"/>
    <property type="project" value="InterPro"/>
</dbReference>
<dbReference type="GO" id="GO:0006122">
    <property type="term" value="P:mitochondrial electron transport, ubiquinol to cytochrome c"/>
    <property type="evidence" value="ECO:0007669"/>
    <property type="project" value="TreeGrafter"/>
</dbReference>
<dbReference type="CDD" id="cd00290">
    <property type="entry name" value="cytochrome_b_C"/>
    <property type="match status" value="1"/>
</dbReference>
<dbReference type="CDD" id="cd00284">
    <property type="entry name" value="Cytochrome_b_N"/>
    <property type="match status" value="1"/>
</dbReference>
<dbReference type="FunFam" id="1.20.810.10:FF:000002">
    <property type="entry name" value="Cytochrome b"/>
    <property type="match status" value="1"/>
</dbReference>
<dbReference type="Gene3D" id="1.20.810.10">
    <property type="entry name" value="Cytochrome Bc1 Complex, Chain C"/>
    <property type="match status" value="1"/>
</dbReference>
<dbReference type="InterPro" id="IPR005798">
    <property type="entry name" value="Cyt_b/b6_C"/>
</dbReference>
<dbReference type="InterPro" id="IPR036150">
    <property type="entry name" value="Cyt_b/b6_C_sf"/>
</dbReference>
<dbReference type="InterPro" id="IPR005797">
    <property type="entry name" value="Cyt_b/b6_N"/>
</dbReference>
<dbReference type="InterPro" id="IPR027387">
    <property type="entry name" value="Cytb/b6-like_sf"/>
</dbReference>
<dbReference type="InterPro" id="IPR030689">
    <property type="entry name" value="Cytochrome_b"/>
</dbReference>
<dbReference type="InterPro" id="IPR048260">
    <property type="entry name" value="Cytochrome_b_C_euk/bac"/>
</dbReference>
<dbReference type="InterPro" id="IPR048259">
    <property type="entry name" value="Cytochrome_b_N_euk/bac"/>
</dbReference>
<dbReference type="InterPro" id="IPR016174">
    <property type="entry name" value="Di-haem_cyt_TM"/>
</dbReference>
<dbReference type="PANTHER" id="PTHR19271">
    <property type="entry name" value="CYTOCHROME B"/>
    <property type="match status" value="1"/>
</dbReference>
<dbReference type="PANTHER" id="PTHR19271:SF16">
    <property type="entry name" value="CYTOCHROME B"/>
    <property type="match status" value="1"/>
</dbReference>
<dbReference type="Pfam" id="PF00032">
    <property type="entry name" value="Cytochrom_B_C"/>
    <property type="match status" value="1"/>
</dbReference>
<dbReference type="Pfam" id="PF00033">
    <property type="entry name" value="Cytochrome_B"/>
    <property type="match status" value="1"/>
</dbReference>
<dbReference type="PIRSF" id="PIRSF038885">
    <property type="entry name" value="COB"/>
    <property type="match status" value="1"/>
</dbReference>
<dbReference type="SUPFAM" id="SSF81648">
    <property type="entry name" value="a domain/subunit of cytochrome bc1 complex (Ubiquinol-cytochrome c reductase)"/>
    <property type="match status" value="1"/>
</dbReference>
<dbReference type="SUPFAM" id="SSF81342">
    <property type="entry name" value="Transmembrane di-heme cytochromes"/>
    <property type="match status" value="1"/>
</dbReference>
<dbReference type="PROSITE" id="PS51003">
    <property type="entry name" value="CYTB_CTER"/>
    <property type="match status" value="1"/>
</dbReference>
<dbReference type="PROSITE" id="PS51002">
    <property type="entry name" value="CYTB_NTER"/>
    <property type="match status" value="1"/>
</dbReference>
<name>CYB_POLFR</name>
<evidence type="ECO:0000250" key="1"/>
<evidence type="ECO:0000250" key="2">
    <source>
        <dbReference type="UniProtKB" id="P00157"/>
    </source>
</evidence>
<evidence type="ECO:0000255" key="3">
    <source>
        <dbReference type="PROSITE-ProRule" id="PRU00967"/>
    </source>
</evidence>
<evidence type="ECO:0000255" key="4">
    <source>
        <dbReference type="PROSITE-ProRule" id="PRU00968"/>
    </source>
</evidence>
<protein>
    <recommendedName>
        <fullName>Cytochrome b</fullName>
    </recommendedName>
    <alternativeName>
        <fullName>Complex III subunit 3</fullName>
    </alternativeName>
    <alternativeName>
        <fullName>Complex III subunit III</fullName>
    </alternativeName>
    <alternativeName>
        <fullName>Cytochrome b-c1 complex subunit 3</fullName>
    </alternativeName>
    <alternativeName>
        <fullName>Ubiquinol-cytochrome-c reductase complex cytochrome b subunit</fullName>
    </alternativeName>
</protein>
<gene>
    <name type="primary">MT-CYB</name>
    <name type="synonym">COB</name>
    <name type="synonym">CYTB</name>
    <name type="synonym">MTCYB</name>
</gene>
<geneLocation type="mitochondrion"/>
<reference key="1">
    <citation type="submission" date="1999-06" db="EMBL/GenBank/DDBJ databases">
        <title>A molecular phylogeny of ground squirrels and prairie dogs.</title>
        <authorList>
            <person name="Harrison R.G."/>
            <person name="Sherman P.W."/>
            <person name="Yensen E."/>
            <person name="Hoffmann R.S."/>
            <person name="Bogdanowicz S.M."/>
        </authorList>
    </citation>
    <scope>NUCLEOTIDE SEQUENCE [GENOMIC DNA]</scope>
    <source>
        <strain>Isolate S43</strain>
    </source>
</reference>